<feature type="chain" id="PRO_1000004587" description="Translation initiation factor IF-3">
    <location>
        <begin position="1"/>
        <end position="183"/>
    </location>
</feature>
<keyword id="KW-0963">Cytoplasm</keyword>
<keyword id="KW-0396">Initiation factor</keyword>
<keyword id="KW-0648">Protein biosynthesis</keyword>
<reference key="1">
    <citation type="journal article" date="2006" name="PLoS Genet.">
        <title>The complete genome sequence and comparative genome analysis of the high pathogenicity Yersinia enterocolitica strain 8081.</title>
        <authorList>
            <person name="Thomson N.R."/>
            <person name="Howard S."/>
            <person name="Wren B.W."/>
            <person name="Holden M.T.G."/>
            <person name="Crossman L."/>
            <person name="Challis G.L."/>
            <person name="Churcher C."/>
            <person name="Mungall K."/>
            <person name="Brooks K."/>
            <person name="Chillingworth T."/>
            <person name="Feltwell T."/>
            <person name="Abdellah Z."/>
            <person name="Hauser H."/>
            <person name="Jagels K."/>
            <person name="Maddison M."/>
            <person name="Moule S."/>
            <person name="Sanders M."/>
            <person name="Whitehead S."/>
            <person name="Quail M.A."/>
            <person name="Dougan G."/>
            <person name="Parkhill J."/>
            <person name="Prentice M.B."/>
        </authorList>
    </citation>
    <scope>NUCLEOTIDE SEQUENCE [LARGE SCALE GENOMIC DNA]</scope>
    <source>
        <strain>NCTC 13174 / 8081</strain>
    </source>
</reference>
<proteinExistence type="inferred from homology"/>
<comment type="function">
    <text evidence="1">IF-3 binds to the 30S ribosomal subunit and shifts the equilibrium between 70S ribosomes and their 50S and 30S subunits in favor of the free subunits, thus enhancing the availability of 30S subunits on which protein synthesis initiation begins.</text>
</comment>
<comment type="subunit">
    <text evidence="1">Monomer.</text>
</comment>
<comment type="subcellular location">
    <subcellularLocation>
        <location evidence="1">Cytoplasm</location>
    </subcellularLocation>
</comment>
<comment type="similarity">
    <text evidence="1">Belongs to the IF-3 family.</text>
</comment>
<sequence>MKGGKRVQPARPNRINKEIRATEVRLTGVDGEQIGIVSLNEALEKAEEAGVDLVEISPNAEPPVCRIMDYGKFLYEKSKSTKEQKKKQKVIQVKEIKFRPGTDDGDYQVKLRNLIRFLEDGDKAKITLRFRGREMAHQQIGMEVLNRVKKDLTEDSDLAVVESFPTRIEGRQMIMVLAPKKRQ</sequence>
<gene>
    <name evidence="1" type="primary">infC</name>
    <name type="ordered locus">YE1913</name>
</gene>
<protein>
    <recommendedName>
        <fullName evidence="1">Translation initiation factor IF-3</fullName>
    </recommendedName>
</protein>
<dbReference type="EMBL" id="AM286415">
    <property type="protein sequence ID" value="CAL11993.1"/>
    <property type="molecule type" value="Genomic_DNA"/>
</dbReference>
<dbReference type="RefSeq" id="WP_011816226.1">
    <property type="nucleotide sequence ID" value="NC_008800.1"/>
</dbReference>
<dbReference type="RefSeq" id="YP_001006171.1">
    <property type="nucleotide sequence ID" value="NC_008800.1"/>
</dbReference>
<dbReference type="SMR" id="A1JMK2"/>
<dbReference type="GeneID" id="97456072"/>
<dbReference type="KEGG" id="yen:YE1913"/>
<dbReference type="PATRIC" id="fig|393305.7.peg.2067"/>
<dbReference type="eggNOG" id="COG0290">
    <property type="taxonomic scope" value="Bacteria"/>
</dbReference>
<dbReference type="HOGENOM" id="CLU_054919_3_2_6"/>
<dbReference type="OrthoDB" id="9806014at2"/>
<dbReference type="Proteomes" id="UP000000642">
    <property type="component" value="Chromosome"/>
</dbReference>
<dbReference type="GO" id="GO:0005829">
    <property type="term" value="C:cytosol"/>
    <property type="evidence" value="ECO:0007669"/>
    <property type="project" value="TreeGrafter"/>
</dbReference>
<dbReference type="GO" id="GO:0016020">
    <property type="term" value="C:membrane"/>
    <property type="evidence" value="ECO:0007669"/>
    <property type="project" value="TreeGrafter"/>
</dbReference>
<dbReference type="GO" id="GO:0043022">
    <property type="term" value="F:ribosome binding"/>
    <property type="evidence" value="ECO:0007669"/>
    <property type="project" value="TreeGrafter"/>
</dbReference>
<dbReference type="GO" id="GO:0003743">
    <property type="term" value="F:translation initiation factor activity"/>
    <property type="evidence" value="ECO:0007669"/>
    <property type="project" value="UniProtKB-UniRule"/>
</dbReference>
<dbReference type="GO" id="GO:0032790">
    <property type="term" value="P:ribosome disassembly"/>
    <property type="evidence" value="ECO:0007669"/>
    <property type="project" value="TreeGrafter"/>
</dbReference>
<dbReference type="FunFam" id="3.10.20.80:FF:000001">
    <property type="entry name" value="Translation initiation factor IF-3"/>
    <property type="match status" value="1"/>
</dbReference>
<dbReference type="FunFam" id="3.30.110.10:FF:000001">
    <property type="entry name" value="Translation initiation factor IF-3"/>
    <property type="match status" value="1"/>
</dbReference>
<dbReference type="Gene3D" id="3.30.110.10">
    <property type="entry name" value="Translation initiation factor 3 (IF-3), C-terminal domain"/>
    <property type="match status" value="1"/>
</dbReference>
<dbReference type="Gene3D" id="3.10.20.80">
    <property type="entry name" value="Translation initiation factor 3 (IF-3), N-terminal domain"/>
    <property type="match status" value="1"/>
</dbReference>
<dbReference type="HAMAP" id="MF_00080">
    <property type="entry name" value="IF_3"/>
    <property type="match status" value="1"/>
</dbReference>
<dbReference type="InterPro" id="IPR036788">
    <property type="entry name" value="T_IF-3_C_sf"/>
</dbReference>
<dbReference type="InterPro" id="IPR036787">
    <property type="entry name" value="T_IF-3_N_sf"/>
</dbReference>
<dbReference type="InterPro" id="IPR019813">
    <property type="entry name" value="Translation_initiation_fac3_CS"/>
</dbReference>
<dbReference type="InterPro" id="IPR001288">
    <property type="entry name" value="Translation_initiation_fac_3"/>
</dbReference>
<dbReference type="InterPro" id="IPR019815">
    <property type="entry name" value="Translation_initiation_fac_3_C"/>
</dbReference>
<dbReference type="InterPro" id="IPR019814">
    <property type="entry name" value="Translation_initiation_fac_3_N"/>
</dbReference>
<dbReference type="NCBIfam" id="TIGR00168">
    <property type="entry name" value="infC"/>
    <property type="match status" value="1"/>
</dbReference>
<dbReference type="PANTHER" id="PTHR10938">
    <property type="entry name" value="TRANSLATION INITIATION FACTOR IF-3"/>
    <property type="match status" value="1"/>
</dbReference>
<dbReference type="PANTHER" id="PTHR10938:SF0">
    <property type="entry name" value="TRANSLATION INITIATION FACTOR IF-3, MITOCHONDRIAL"/>
    <property type="match status" value="1"/>
</dbReference>
<dbReference type="Pfam" id="PF00707">
    <property type="entry name" value="IF3_C"/>
    <property type="match status" value="1"/>
</dbReference>
<dbReference type="Pfam" id="PF05198">
    <property type="entry name" value="IF3_N"/>
    <property type="match status" value="1"/>
</dbReference>
<dbReference type="SUPFAM" id="SSF55200">
    <property type="entry name" value="Translation initiation factor IF3, C-terminal domain"/>
    <property type="match status" value="1"/>
</dbReference>
<dbReference type="SUPFAM" id="SSF54364">
    <property type="entry name" value="Translation initiation factor IF3, N-terminal domain"/>
    <property type="match status" value="1"/>
</dbReference>
<dbReference type="PROSITE" id="PS00938">
    <property type="entry name" value="IF3"/>
    <property type="match status" value="1"/>
</dbReference>
<organism>
    <name type="scientific">Yersinia enterocolitica serotype O:8 / biotype 1B (strain NCTC 13174 / 8081)</name>
    <dbReference type="NCBI Taxonomy" id="393305"/>
    <lineage>
        <taxon>Bacteria</taxon>
        <taxon>Pseudomonadati</taxon>
        <taxon>Pseudomonadota</taxon>
        <taxon>Gammaproteobacteria</taxon>
        <taxon>Enterobacterales</taxon>
        <taxon>Yersiniaceae</taxon>
        <taxon>Yersinia</taxon>
    </lineage>
</organism>
<accession>A1JMK2</accession>
<evidence type="ECO:0000255" key="1">
    <source>
        <dbReference type="HAMAP-Rule" id="MF_00080"/>
    </source>
</evidence>
<name>IF3_YERE8</name>